<accession>P20364</accession>
<sequence>FQVCHSLGGGTGSGMGTLLISKIREEYPDRMMLTFSVFPSPKVSDTVVEPYNATLSVHQLVENADVCMVLDNEALYDICFRTLKLTTPSFGDLNHLISATMSGVTCSLRFPGQLNSDLRKLAVILIPFPRLHFFMVGFAPLTSRGSQQYRSLSVPELTQQMWDSKNMMCAADPRHGRYLTASAMFREKMSTKDLDEQMINVQNKNSSYFVEWIPNNVKSTVCDIPPTGLKMASTFIGNSTSIQEMFRRVSEQFTAMFRRKAFLHWYTGEGMDEMEFTEAESNMNDLVSEYQQYQDATADEEEYYEDEEEEEAQGM</sequence>
<feature type="chain" id="PRO_0000048338" description="Tubulin beta-1 chain">
    <location>
        <begin position="1" status="less than"/>
        <end position="315"/>
    </location>
</feature>
<feature type="region of interest" description="Disordered" evidence="3">
    <location>
        <begin position="295"/>
        <end position="315"/>
    </location>
</feature>
<feature type="compositionally biased region" description="Acidic residues" evidence="3">
    <location>
        <begin position="297"/>
        <end position="315"/>
    </location>
</feature>
<feature type="binding site" evidence="2">
    <location>
        <position position="6"/>
    </location>
    <ligand>
        <name>GTP</name>
        <dbReference type="ChEBI" id="CHEBI:37565"/>
    </ligand>
</feature>
<feature type="binding site" evidence="2">
    <location>
        <position position="10"/>
    </location>
    <ligand>
        <name>GTP</name>
        <dbReference type="ChEBI" id="CHEBI:37565"/>
    </ligand>
</feature>
<feature type="binding site" evidence="2">
    <location>
        <position position="11"/>
    </location>
    <ligand>
        <name>GTP</name>
        <dbReference type="ChEBI" id="CHEBI:37565"/>
    </ligand>
</feature>
<feature type="binding site" evidence="2">
    <location>
        <position position="12"/>
    </location>
    <ligand>
        <name>GTP</name>
        <dbReference type="ChEBI" id="CHEBI:37565"/>
    </ligand>
</feature>
<feature type="binding site" evidence="2">
    <location>
        <position position="72"/>
    </location>
    <ligand>
        <name>GTP</name>
        <dbReference type="ChEBI" id="CHEBI:37565"/>
    </ligand>
</feature>
<feature type="binding site" evidence="2">
    <location>
        <position position="94"/>
    </location>
    <ligand>
        <name>GTP</name>
        <dbReference type="ChEBI" id="CHEBI:37565"/>
    </ligand>
</feature>
<feature type="non-terminal residue">
    <location>
        <position position="1"/>
    </location>
</feature>
<keyword id="KW-0963">Cytoplasm</keyword>
<keyword id="KW-0206">Cytoskeleton</keyword>
<keyword id="KW-0903">Direct protein sequencing</keyword>
<keyword id="KW-0342">GTP-binding</keyword>
<keyword id="KW-0493">Microtubule</keyword>
<keyword id="KW-0547">Nucleotide-binding</keyword>
<organism>
    <name type="scientific">Daucus carota</name>
    <name type="common">Wild carrot</name>
    <dbReference type="NCBI Taxonomy" id="4039"/>
    <lineage>
        <taxon>Eukaryota</taxon>
        <taxon>Viridiplantae</taxon>
        <taxon>Streptophyta</taxon>
        <taxon>Embryophyta</taxon>
        <taxon>Tracheophyta</taxon>
        <taxon>Spermatophyta</taxon>
        <taxon>Magnoliopsida</taxon>
        <taxon>eudicotyledons</taxon>
        <taxon>Gunneridae</taxon>
        <taxon>Pentapetalae</taxon>
        <taxon>asterids</taxon>
        <taxon>campanulids</taxon>
        <taxon>Apiales</taxon>
        <taxon>Apiaceae</taxon>
        <taxon>Apioideae</taxon>
        <taxon>Scandiceae</taxon>
        <taxon>Daucinae</taxon>
        <taxon>Daucus</taxon>
        <taxon>Daucus sect. Daucus</taxon>
    </lineage>
</organism>
<name>TBB1_DAUCA</name>
<gene>
    <name type="primary">TUBB1</name>
</gene>
<dbReference type="EMBL" id="U64029">
    <property type="protein sequence ID" value="AAB64307.1"/>
    <property type="molecule type" value="Genomic_DNA"/>
</dbReference>
<dbReference type="PIR" id="PQ0011">
    <property type="entry name" value="PQ0011"/>
</dbReference>
<dbReference type="SMR" id="P20364"/>
<dbReference type="GO" id="GO:0005737">
    <property type="term" value="C:cytoplasm"/>
    <property type="evidence" value="ECO:0007669"/>
    <property type="project" value="UniProtKB-KW"/>
</dbReference>
<dbReference type="GO" id="GO:0005874">
    <property type="term" value="C:microtubule"/>
    <property type="evidence" value="ECO:0007669"/>
    <property type="project" value="UniProtKB-KW"/>
</dbReference>
<dbReference type="GO" id="GO:0005525">
    <property type="term" value="F:GTP binding"/>
    <property type="evidence" value="ECO:0007669"/>
    <property type="project" value="UniProtKB-KW"/>
</dbReference>
<dbReference type="GO" id="GO:0003924">
    <property type="term" value="F:GTPase activity"/>
    <property type="evidence" value="ECO:0007669"/>
    <property type="project" value="InterPro"/>
</dbReference>
<dbReference type="GO" id="GO:0005200">
    <property type="term" value="F:structural constituent of cytoskeleton"/>
    <property type="evidence" value="ECO:0007669"/>
    <property type="project" value="InterPro"/>
</dbReference>
<dbReference type="GO" id="GO:0007017">
    <property type="term" value="P:microtubule-based process"/>
    <property type="evidence" value="ECO:0007669"/>
    <property type="project" value="InterPro"/>
</dbReference>
<dbReference type="CDD" id="cd02187">
    <property type="entry name" value="beta_tubulin"/>
    <property type="match status" value="1"/>
</dbReference>
<dbReference type="FunFam" id="1.10.287.600:FF:000002">
    <property type="entry name" value="Tubulin beta chain"/>
    <property type="match status" value="1"/>
</dbReference>
<dbReference type="FunFam" id="3.30.1330.20:FF:000002">
    <property type="entry name" value="Tubulin beta chain"/>
    <property type="match status" value="1"/>
</dbReference>
<dbReference type="FunFam" id="3.40.50.1440:FF:000015">
    <property type="entry name" value="Tubulin beta class I"/>
    <property type="match status" value="1"/>
</dbReference>
<dbReference type="Gene3D" id="1.10.287.600">
    <property type="entry name" value="Helix hairpin bin"/>
    <property type="match status" value="1"/>
</dbReference>
<dbReference type="Gene3D" id="3.30.1330.20">
    <property type="entry name" value="Tubulin/FtsZ, C-terminal domain"/>
    <property type="match status" value="1"/>
</dbReference>
<dbReference type="Gene3D" id="3.40.50.1440">
    <property type="entry name" value="Tubulin/FtsZ, GTPase domain"/>
    <property type="match status" value="1"/>
</dbReference>
<dbReference type="InterPro" id="IPR002453">
    <property type="entry name" value="Beta_tubulin"/>
</dbReference>
<dbReference type="InterPro" id="IPR008280">
    <property type="entry name" value="Tub_FtsZ_C"/>
</dbReference>
<dbReference type="InterPro" id="IPR000217">
    <property type="entry name" value="Tubulin"/>
</dbReference>
<dbReference type="InterPro" id="IPR037103">
    <property type="entry name" value="Tubulin/FtsZ-like_C"/>
</dbReference>
<dbReference type="InterPro" id="IPR018316">
    <property type="entry name" value="Tubulin/FtsZ_2-layer-sand-dom"/>
</dbReference>
<dbReference type="InterPro" id="IPR036525">
    <property type="entry name" value="Tubulin/FtsZ_GTPase_sf"/>
</dbReference>
<dbReference type="InterPro" id="IPR023123">
    <property type="entry name" value="Tubulin_C"/>
</dbReference>
<dbReference type="InterPro" id="IPR017975">
    <property type="entry name" value="Tubulin_CS"/>
</dbReference>
<dbReference type="InterPro" id="IPR003008">
    <property type="entry name" value="Tubulin_FtsZ_GTPase"/>
</dbReference>
<dbReference type="PANTHER" id="PTHR11588">
    <property type="entry name" value="TUBULIN"/>
    <property type="match status" value="1"/>
</dbReference>
<dbReference type="Pfam" id="PF00091">
    <property type="entry name" value="Tubulin"/>
    <property type="match status" value="1"/>
</dbReference>
<dbReference type="Pfam" id="PF03953">
    <property type="entry name" value="Tubulin_C"/>
    <property type="match status" value="1"/>
</dbReference>
<dbReference type="PRINTS" id="PR01163">
    <property type="entry name" value="BETATUBULIN"/>
</dbReference>
<dbReference type="PRINTS" id="PR01161">
    <property type="entry name" value="TUBULIN"/>
</dbReference>
<dbReference type="SMART" id="SM00864">
    <property type="entry name" value="Tubulin"/>
    <property type="match status" value="1"/>
</dbReference>
<dbReference type="SMART" id="SM00865">
    <property type="entry name" value="Tubulin_C"/>
    <property type="match status" value="1"/>
</dbReference>
<dbReference type="SUPFAM" id="SSF55307">
    <property type="entry name" value="Tubulin C-terminal domain-like"/>
    <property type="match status" value="1"/>
</dbReference>
<dbReference type="SUPFAM" id="SSF52490">
    <property type="entry name" value="Tubulin nucleotide-binding domain-like"/>
    <property type="match status" value="1"/>
</dbReference>
<dbReference type="PROSITE" id="PS00227">
    <property type="entry name" value="TUBULIN"/>
    <property type="match status" value="1"/>
</dbReference>
<comment type="function">
    <text>Tubulin is the major constituent of microtubules, a cylinder consisting of laterally associated linear protofilaments composed of alpha- and beta-tubulin heterodimers. Microtubules grow by the addition of GTP-tubulin dimers to the microtubule end, where a stabilizing cap forms. Below the cap, tubulin dimers are in GDP-bound state, owing to GTPase activity of alpha-tubulin.</text>
</comment>
<comment type="cofactor">
    <cofactor evidence="1">
        <name>Mg(2+)</name>
        <dbReference type="ChEBI" id="CHEBI:18420"/>
    </cofactor>
</comment>
<comment type="subunit">
    <text>Dimer of alpha and beta chains. A typical microtubule is a hollow water-filled tube with an outer diameter of 25 nm and an inner diameter of 15 nM. Alpha-beta heterodimers associate head-to-tail to form protofilaments running lengthwise along the microtubule wall with the beta-tubulin subunit facing the microtubule plus end conferring a structural polarity. Microtubules usually have 13 protofilaments but different protofilament numbers can be found in some organisms and specialized cells.</text>
</comment>
<comment type="subcellular location">
    <subcellularLocation>
        <location>Cytoplasm</location>
        <location>Cytoskeleton</location>
    </subcellularLocation>
</comment>
<comment type="similarity">
    <text evidence="4">Belongs to the tubulin family.</text>
</comment>
<reference key="1">
    <citation type="journal article" date="1997" name="Cell Struct. Funct.">
        <title>Characterization of the carrot beta-tubulin gene coding a divergent isotype, beta-2.</title>
        <authorList>
            <person name="Okamura S."/>
            <person name="Naito K."/>
            <person name="Sonehara S."/>
            <person name="Ohkawa H."/>
            <person name="Kuramori S."/>
            <person name="Tatsuta M."/>
            <person name="Minamizono M."/>
            <person name="Kataoka T."/>
        </authorList>
    </citation>
    <scope>NUCLEOTIDE SEQUENCE [GENOMIC DNA]</scope>
    <source>
        <strain>cv. Kintoki</strain>
    </source>
</reference>
<reference key="2">
    <citation type="journal article" date="1988" name="Biochem. Int.">
        <title>Primary structure of the carboxy-terminal region of a higher plant beta-tubulin.</title>
        <authorList>
            <person name="Okamura S."/>
            <person name="Azumano I."/>
        </authorList>
    </citation>
    <scope>PROTEIN SEQUENCE OF 277-315</scope>
</reference>
<protein>
    <recommendedName>
        <fullName>Tubulin beta-1 chain</fullName>
    </recommendedName>
    <alternativeName>
        <fullName>Beta-1-tubulin</fullName>
    </alternativeName>
</protein>
<evidence type="ECO:0000250" key="1">
    <source>
        <dbReference type="UniProtKB" id="P68363"/>
    </source>
</evidence>
<evidence type="ECO:0000250" key="2">
    <source>
        <dbReference type="UniProtKB" id="Q13509"/>
    </source>
</evidence>
<evidence type="ECO:0000256" key="3">
    <source>
        <dbReference type="SAM" id="MobiDB-lite"/>
    </source>
</evidence>
<evidence type="ECO:0000305" key="4"/>
<proteinExistence type="evidence at protein level"/>